<name>ICP22_SHV21</name>
<organism>
    <name type="scientific">Saimiriine herpesvirus 2 (strain 11)</name>
    <name type="common">SaHV-2</name>
    <name type="synonym">Herpesvirus saimiri</name>
    <dbReference type="NCBI Taxonomy" id="10383"/>
    <lineage>
        <taxon>Viruses</taxon>
        <taxon>Duplodnaviria</taxon>
        <taxon>Heunggongvirae</taxon>
        <taxon>Peploviricota</taxon>
        <taxon>Herviviricetes</taxon>
        <taxon>Herpesvirales</taxon>
        <taxon>Orthoherpesviridae</taxon>
        <taxon>Gammaherpesvirinae</taxon>
        <taxon>Rhadinovirus</taxon>
        <taxon>Rhadinovirus saimiriinegamma2</taxon>
        <taxon>Saimiriine herpesvirus 2</taxon>
    </lineage>
</organism>
<organismHost>
    <name type="scientific">Saimiri sciureus</name>
    <name type="common">Common squirrel monkey</name>
    <dbReference type="NCBI Taxonomy" id="9521"/>
</organismHost>
<reference key="1">
    <citation type="journal article" date="1992" name="J. Virol.">
        <title>Primary structure of the herpesvirus saimiri genome.</title>
        <authorList>
            <person name="Albrecht J.-C."/>
            <person name="Nicholas J."/>
            <person name="Biller D."/>
            <person name="Cameron K.R."/>
            <person name="Biesinger B."/>
            <person name="Newman C."/>
            <person name="Wittmann S."/>
            <person name="Craxton M.A."/>
            <person name="Coleman H."/>
            <person name="Fleckenstein B."/>
            <person name="Honess R.W."/>
        </authorList>
    </citation>
    <scope>NUCLEOTIDE SEQUENCE [LARGE SCALE GENOMIC DNA]</scope>
</reference>
<reference key="2">
    <citation type="journal article" date="1992" name="Virology">
        <title>Analysis of nucleotide sequence of the rightmost 43 kbp of herpesvirus saimiri (HVS) L-DNA: general conservation of genetic organization between HVS and Epstein-Barr virus.</title>
        <authorList>
            <person name="Nicholas J."/>
            <person name="Cameron K.R."/>
            <person name="Coleman H."/>
            <person name="Newman C."/>
            <person name="Honess R.W."/>
        </authorList>
    </citation>
    <scope>NUCLEOTIDE SEQUENCE [GENOMIC DNA]</scope>
</reference>
<feature type="chain" id="PRO_0000115844" description="Transcriptional regulator ICP22 homolog">
    <location>
        <begin position="1"/>
        <end position="407"/>
    </location>
</feature>
<feature type="region of interest" description="Disordered" evidence="1">
    <location>
        <begin position="34"/>
        <end position="268"/>
    </location>
</feature>
<feature type="compositionally biased region" description="Acidic residues" evidence="1">
    <location>
        <begin position="81"/>
        <end position="241"/>
    </location>
</feature>
<evidence type="ECO:0000256" key="1">
    <source>
        <dbReference type="SAM" id="MobiDB-lite"/>
    </source>
</evidence>
<evidence type="ECO:0000305" key="2"/>
<protein>
    <recommendedName>
        <fullName>Transcriptional regulator ICP22 homolog</fullName>
    </recommendedName>
    <alternativeName>
        <fullName>Immediate-early protein</fullName>
    </alternativeName>
</protein>
<proteinExistence type="inferred from homology"/>
<gene>
    <name type="primary">73</name>
    <name type="synonym">ECLF1</name>
</gene>
<dbReference type="EMBL" id="X64346">
    <property type="protein sequence ID" value="CAA45696.1"/>
    <property type="molecule type" value="Genomic_DNA"/>
</dbReference>
<dbReference type="EMBL" id="M86409">
    <property type="protein sequence ID" value="AAA46149.1"/>
    <property type="molecule type" value="Genomic_DNA"/>
</dbReference>
<dbReference type="EMBL" id="S76368">
    <property type="protein sequence ID" value="AAB21116.1"/>
    <property type="molecule type" value="Genomic_DNA"/>
</dbReference>
<dbReference type="RefSeq" id="NP_040275.1">
    <property type="nucleotide sequence ID" value="NC_001350.1"/>
</dbReference>
<dbReference type="SMR" id="Q01042"/>
<dbReference type="KEGG" id="vg:1682516"/>
<dbReference type="Proteomes" id="UP000000587">
    <property type="component" value="Segment"/>
</dbReference>
<dbReference type="GO" id="GO:0042025">
    <property type="term" value="C:host cell nucleus"/>
    <property type="evidence" value="ECO:0007669"/>
    <property type="project" value="InterPro"/>
</dbReference>
<dbReference type="GO" id="GO:0003677">
    <property type="term" value="F:DNA binding"/>
    <property type="evidence" value="ECO:0007669"/>
    <property type="project" value="InterPro"/>
</dbReference>
<dbReference type="Gene3D" id="3.30.70.390">
    <property type="entry name" value="Epstein Barr virus nuclear antigen-1, DNA-binding domain"/>
    <property type="match status" value="1"/>
</dbReference>
<dbReference type="InterPro" id="IPR037007">
    <property type="entry name" value="EBNA1_DNA-bd_sf"/>
</dbReference>
<dbReference type="InterPro" id="IPR048523">
    <property type="entry name" value="LANA1_DNA-bd"/>
</dbReference>
<dbReference type="Pfam" id="PF21501">
    <property type="entry name" value="LANA1_DNA-bd"/>
    <property type="match status" value="1"/>
</dbReference>
<accession>Q01042</accession>
<comment type="similarity">
    <text evidence="2">Belongs to the herpesviridae ICP22 family.</text>
</comment>
<keyword id="KW-0244">Early protein</keyword>
<keyword id="KW-1185">Reference proteome</keyword>
<sequence length="407" mass="46618">MAPRRRKAKRRRHTLRSECKDKCKCHVQCYVSPRKRRRKLKPQGDDDINTTHQQQAALTEEQRREEVEEEGEERERRGEEEREGEGGEEGEGREEAEEEEAEEKEAEEEEAEEAEEEAEEEEAEEAEAEEEEAEEEEAEEEEAEEAEEEEAEEAEEEAEEEEAEEEAEEEAEEAEEAEEEAEEEAEEAEEAEEAEEAEEEAEEAEEEAEEAEEEAEEAEEAEEAEEAEEEAEEAEEEEEEAGPSTPRLPHYKVVGQKPSTQPGGVPKLCLKMQPQHRSRLPKGKQSHDKVPKKYQARNKFFSQAAPSVLDLSPKSWCWVVDFWGPTDALYRLSRSLSFPGAVSSGIQTFPKGPHATGPWVYFITVYCRTFQTAKEVIKAQKKYEKKYPRSAKLKASLGKFSKSLPIE</sequence>